<name>RL18_ECOK1</name>
<reference key="1">
    <citation type="journal article" date="2007" name="J. Bacteriol.">
        <title>The genome sequence of avian pathogenic Escherichia coli strain O1:K1:H7 shares strong similarities with human extraintestinal pathogenic E. coli genomes.</title>
        <authorList>
            <person name="Johnson T.J."/>
            <person name="Kariyawasam S."/>
            <person name="Wannemuehler Y."/>
            <person name="Mangiamele P."/>
            <person name="Johnson S.J."/>
            <person name="Doetkott C."/>
            <person name="Skyberg J.A."/>
            <person name="Lynne A.M."/>
            <person name="Johnson J.R."/>
            <person name="Nolan L.K."/>
        </authorList>
    </citation>
    <scope>NUCLEOTIDE SEQUENCE [LARGE SCALE GENOMIC DNA]</scope>
</reference>
<keyword id="KW-1185">Reference proteome</keyword>
<keyword id="KW-0687">Ribonucleoprotein</keyword>
<keyword id="KW-0689">Ribosomal protein</keyword>
<keyword id="KW-0694">RNA-binding</keyword>
<keyword id="KW-0699">rRNA-binding</keyword>
<dbReference type="EMBL" id="CP000468">
    <property type="protein sequence ID" value="ABJ02783.1"/>
    <property type="molecule type" value="Genomic_DNA"/>
</dbReference>
<dbReference type="RefSeq" id="WP_000358960.1">
    <property type="nucleotide sequence ID" value="NZ_CADILS010000044.1"/>
</dbReference>
<dbReference type="EMDB" id="EMD-22087"/>
<dbReference type="SMR" id="A1AGJ3"/>
<dbReference type="GeneID" id="98390426"/>
<dbReference type="KEGG" id="ecv:APECO1_3145"/>
<dbReference type="HOGENOM" id="CLU_098841_0_1_6"/>
<dbReference type="Proteomes" id="UP000008216">
    <property type="component" value="Chromosome"/>
</dbReference>
<dbReference type="GO" id="GO:0022625">
    <property type="term" value="C:cytosolic large ribosomal subunit"/>
    <property type="evidence" value="ECO:0007669"/>
    <property type="project" value="TreeGrafter"/>
</dbReference>
<dbReference type="GO" id="GO:0008097">
    <property type="term" value="F:5S rRNA binding"/>
    <property type="evidence" value="ECO:0007669"/>
    <property type="project" value="TreeGrafter"/>
</dbReference>
<dbReference type="GO" id="GO:0003735">
    <property type="term" value="F:structural constituent of ribosome"/>
    <property type="evidence" value="ECO:0007669"/>
    <property type="project" value="InterPro"/>
</dbReference>
<dbReference type="GO" id="GO:0006412">
    <property type="term" value="P:translation"/>
    <property type="evidence" value="ECO:0007669"/>
    <property type="project" value="UniProtKB-UniRule"/>
</dbReference>
<dbReference type="CDD" id="cd00432">
    <property type="entry name" value="Ribosomal_L18_L5e"/>
    <property type="match status" value="1"/>
</dbReference>
<dbReference type="FunFam" id="3.30.420.100:FF:000001">
    <property type="entry name" value="50S ribosomal protein L18"/>
    <property type="match status" value="1"/>
</dbReference>
<dbReference type="Gene3D" id="3.30.420.100">
    <property type="match status" value="1"/>
</dbReference>
<dbReference type="HAMAP" id="MF_01337_B">
    <property type="entry name" value="Ribosomal_uL18_B"/>
    <property type="match status" value="1"/>
</dbReference>
<dbReference type="InterPro" id="IPR004389">
    <property type="entry name" value="Ribosomal_uL18_bac-type"/>
</dbReference>
<dbReference type="InterPro" id="IPR005484">
    <property type="entry name" value="Ribosomal_uL18_bac/euk"/>
</dbReference>
<dbReference type="NCBIfam" id="TIGR00060">
    <property type="entry name" value="L18_bact"/>
    <property type="match status" value="1"/>
</dbReference>
<dbReference type="PANTHER" id="PTHR12899">
    <property type="entry name" value="39S RIBOSOMAL PROTEIN L18, MITOCHONDRIAL"/>
    <property type="match status" value="1"/>
</dbReference>
<dbReference type="PANTHER" id="PTHR12899:SF3">
    <property type="entry name" value="LARGE RIBOSOMAL SUBUNIT PROTEIN UL18M"/>
    <property type="match status" value="1"/>
</dbReference>
<dbReference type="Pfam" id="PF00861">
    <property type="entry name" value="Ribosomal_L18p"/>
    <property type="match status" value="1"/>
</dbReference>
<dbReference type="SUPFAM" id="SSF53137">
    <property type="entry name" value="Translational machinery components"/>
    <property type="match status" value="1"/>
</dbReference>
<evidence type="ECO:0000255" key="1">
    <source>
        <dbReference type="HAMAP-Rule" id="MF_01337"/>
    </source>
</evidence>
<evidence type="ECO:0000305" key="2"/>
<gene>
    <name evidence="1" type="primary">rplR</name>
    <name type="ordered locus">Ecok1_32890</name>
    <name type="ORF">APECO1_3145</name>
</gene>
<sequence>MDKKSARIRRATRARRKLQELGATRLVVHRTPRHIYAQVIAPNGSEVLVAASTVEKAIAEQLKYTGNKDAAAAVGKAVAERALEKGIKDVSFDRSGFQYHGRVQALADAAREAGLQF</sequence>
<accession>A1AGJ3</accession>
<organism>
    <name type="scientific">Escherichia coli O1:K1 / APEC</name>
    <dbReference type="NCBI Taxonomy" id="405955"/>
    <lineage>
        <taxon>Bacteria</taxon>
        <taxon>Pseudomonadati</taxon>
        <taxon>Pseudomonadota</taxon>
        <taxon>Gammaproteobacteria</taxon>
        <taxon>Enterobacterales</taxon>
        <taxon>Enterobacteriaceae</taxon>
        <taxon>Escherichia</taxon>
    </lineage>
</organism>
<protein>
    <recommendedName>
        <fullName evidence="1">Large ribosomal subunit protein uL18</fullName>
    </recommendedName>
    <alternativeName>
        <fullName evidence="2">50S ribosomal protein L18</fullName>
    </alternativeName>
</protein>
<comment type="function">
    <text evidence="1">This is one of the proteins that bind and probably mediate the attachment of the 5S RNA into the large ribosomal subunit, where it forms part of the central protuberance.</text>
</comment>
<comment type="subunit">
    <text evidence="1">Part of the 50S ribosomal subunit; part of the 5S rRNA/L5/L18/L25 subcomplex. Contacts the 5S and 23S rRNAs.</text>
</comment>
<comment type="similarity">
    <text evidence="1">Belongs to the universal ribosomal protein uL18 family.</text>
</comment>
<proteinExistence type="inferred from homology"/>
<feature type="chain" id="PRO_1000053022" description="Large ribosomal subunit protein uL18">
    <location>
        <begin position="1"/>
        <end position="117"/>
    </location>
</feature>